<evidence type="ECO:0000255" key="1">
    <source>
        <dbReference type="HAMAP-Rule" id="MF_00577"/>
    </source>
</evidence>
<protein>
    <recommendedName>
        <fullName evidence="1">Urocanate hydratase</fullName>
        <shortName evidence="1">Urocanase</shortName>
        <ecNumber evidence="1">4.2.1.49</ecNumber>
    </recommendedName>
    <alternativeName>
        <fullName evidence="1">Imidazolonepropionate hydrolase</fullName>
    </alternativeName>
</protein>
<organism>
    <name type="scientific">Allorhizobium ampelinum (strain ATCC BAA-846 / DSM 112012 / S4)</name>
    <name type="common">Agrobacterium vitis (strain S4)</name>
    <dbReference type="NCBI Taxonomy" id="311402"/>
    <lineage>
        <taxon>Bacteria</taxon>
        <taxon>Pseudomonadati</taxon>
        <taxon>Pseudomonadota</taxon>
        <taxon>Alphaproteobacteria</taxon>
        <taxon>Hyphomicrobiales</taxon>
        <taxon>Rhizobiaceae</taxon>
        <taxon>Rhizobium/Agrobacterium group</taxon>
        <taxon>Allorhizobium</taxon>
        <taxon>Allorhizobium ampelinum</taxon>
    </lineage>
</organism>
<name>HUTU_ALLAM</name>
<gene>
    <name evidence="1" type="primary">hutU</name>
    <name type="ordered locus">Avi_5956</name>
</gene>
<comment type="function">
    <text evidence="1">Catalyzes the conversion of urocanate to 4-imidazolone-5-propionate.</text>
</comment>
<comment type="catalytic activity">
    <reaction evidence="1">
        <text>4-imidazolone-5-propanoate = trans-urocanate + H2O</text>
        <dbReference type="Rhea" id="RHEA:13101"/>
        <dbReference type="ChEBI" id="CHEBI:15377"/>
        <dbReference type="ChEBI" id="CHEBI:17771"/>
        <dbReference type="ChEBI" id="CHEBI:77893"/>
        <dbReference type="EC" id="4.2.1.49"/>
    </reaction>
</comment>
<comment type="cofactor">
    <cofactor evidence="1">
        <name>NAD(+)</name>
        <dbReference type="ChEBI" id="CHEBI:57540"/>
    </cofactor>
    <text evidence="1">Binds 1 NAD(+) per subunit.</text>
</comment>
<comment type="pathway">
    <text evidence="1">Amino-acid degradation; L-histidine degradation into L-glutamate; N-formimidoyl-L-glutamate from L-histidine: step 2/3.</text>
</comment>
<comment type="subcellular location">
    <subcellularLocation>
        <location evidence="1">Cytoplasm</location>
    </subcellularLocation>
</comment>
<comment type="similarity">
    <text evidence="1">Belongs to the urocanase family.</text>
</comment>
<reference key="1">
    <citation type="journal article" date="2009" name="J. Bacteriol.">
        <title>Genome sequences of three Agrobacterium biovars help elucidate the evolution of multichromosome genomes in bacteria.</title>
        <authorList>
            <person name="Slater S.C."/>
            <person name="Goldman B.S."/>
            <person name="Goodner B."/>
            <person name="Setubal J.C."/>
            <person name="Farrand S.K."/>
            <person name="Nester E.W."/>
            <person name="Burr T.J."/>
            <person name="Banta L."/>
            <person name="Dickerman A.W."/>
            <person name="Paulsen I."/>
            <person name="Otten L."/>
            <person name="Suen G."/>
            <person name="Welch R."/>
            <person name="Almeida N.F."/>
            <person name="Arnold F."/>
            <person name="Burton O.T."/>
            <person name="Du Z."/>
            <person name="Ewing A."/>
            <person name="Godsy E."/>
            <person name="Heisel S."/>
            <person name="Houmiel K.L."/>
            <person name="Jhaveri J."/>
            <person name="Lu J."/>
            <person name="Miller N.M."/>
            <person name="Norton S."/>
            <person name="Chen Q."/>
            <person name="Phoolcharoen W."/>
            <person name="Ohlin V."/>
            <person name="Ondrusek D."/>
            <person name="Pride N."/>
            <person name="Stricklin S.L."/>
            <person name="Sun J."/>
            <person name="Wheeler C."/>
            <person name="Wilson L."/>
            <person name="Zhu H."/>
            <person name="Wood D.W."/>
        </authorList>
    </citation>
    <scope>NUCLEOTIDE SEQUENCE [LARGE SCALE GENOMIC DNA]</scope>
    <source>
        <strain>ATCC BAA-846 / DSM 112012 / S4</strain>
    </source>
</reference>
<dbReference type="EC" id="4.2.1.49" evidence="1"/>
<dbReference type="EMBL" id="CP000634">
    <property type="protein sequence ID" value="ACM38984.1"/>
    <property type="molecule type" value="Genomic_DNA"/>
</dbReference>
<dbReference type="RefSeq" id="WP_012654226.1">
    <property type="nucleotide sequence ID" value="NC_011988.1"/>
</dbReference>
<dbReference type="SMR" id="B9K286"/>
<dbReference type="STRING" id="311402.Avi_5956"/>
<dbReference type="KEGG" id="avi:Avi_5956"/>
<dbReference type="eggNOG" id="COG2987">
    <property type="taxonomic scope" value="Bacteria"/>
</dbReference>
<dbReference type="HOGENOM" id="CLU_018868_0_1_5"/>
<dbReference type="UniPathway" id="UPA00379">
    <property type="reaction ID" value="UER00550"/>
</dbReference>
<dbReference type="Proteomes" id="UP000001596">
    <property type="component" value="Chromosome 2"/>
</dbReference>
<dbReference type="GO" id="GO:0005737">
    <property type="term" value="C:cytoplasm"/>
    <property type="evidence" value="ECO:0007669"/>
    <property type="project" value="UniProtKB-SubCell"/>
</dbReference>
<dbReference type="GO" id="GO:0016153">
    <property type="term" value="F:urocanate hydratase activity"/>
    <property type="evidence" value="ECO:0007669"/>
    <property type="project" value="UniProtKB-UniRule"/>
</dbReference>
<dbReference type="GO" id="GO:0019556">
    <property type="term" value="P:L-histidine catabolic process to glutamate and formamide"/>
    <property type="evidence" value="ECO:0007669"/>
    <property type="project" value="UniProtKB-UniPathway"/>
</dbReference>
<dbReference type="GO" id="GO:0019557">
    <property type="term" value="P:L-histidine catabolic process to glutamate and formate"/>
    <property type="evidence" value="ECO:0007669"/>
    <property type="project" value="UniProtKB-UniPathway"/>
</dbReference>
<dbReference type="FunFam" id="3.40.50.10730:FF:000001">
    <property type="entry name" value="Urocanate hydratase"/>
    <property type="match status" value="1"/>
</dbReference>
<dbReference type="Gene3D" id="3.40.50.10730">
    <property type="entry name" value="Urocanase like domains"/>
    <property type="match status" value="1"/>
</dbReference>
<dbReference type="Gene3D" id="3.40.1770.10">
    <property type="entry name" value="Urocanase superfamily"/>
    <property type="match status" value="1"/>
</dbReference>
<dbReference type="HAMAP" id="MF_00577">
    <property type="entry name" value="HutU"/>
    <property type="match status" value="1"/>
</dbReference>
<dbReference type="InterPro" id="IPR055351">
    <property type="entry name" value="Urocanase"/>
</dbReference>
<dbReference type="InterPro" id="IPR023637">
    <property type="entry name" value="Urocanase-like"/>
</dbReference>
<dbReference type="InterPro" id="IPR035401">
    <property type="entry name" value="Urocanase_C"/>
</dbReference>
<dbReference type="InterPro" id="IPR038364">
    <property type="entry name" value="Urocanase_central_sf"/>
</dbReference>
<dbReference type="InterPro" id="IPR023636">
    <property type="entry name" value="Urocanase_CS"/>
</dbReference>
<dbReference type="InterPro" id="IPR035400">
    <property type="entry name" value="Urocanase_N"/>
</dbReference>
<dbReference type="InterPro" id="IPR035085">
    <property type="entry name" value="Urocanase_Rossmann-like"/>
</dbReference>
<dbReference type="InterPro" id="IPR036190">
    <property type="entry name" value="Urocanase_sf"/>
</dbReference>
<dbReference type="NCBIfam" id="TIGR01228">
    <property type="entry name" value="hutU"/>
    <property type="match status" value="1"/>
</dbReference>
<dbReference type="NCBIfam" id="NF003820">
    <property type="entry name" value="PRK05414.1"/>
    <property type="match status" value="1"/>
</dbReference>
<dbReference type="PANTHER" id="PTHR12216">
    <property type="entry name" value="UROCANATE HYDRATASE"/>
    <property type="match status" value="1"/>
</dbReference>
<dbReference type="PANTHER" id="PTHR12216:SF4">
    <property type="entry name" value="UROCANATE HYDRATASE"/>
    <property type="match status" value="1"/>
</dbReference>
<dbReference type="Pfam" id="PF01175">
    <property type="entry name" value="Urocanase"/>
    <property type="match status" value="1"/>
</dbReference>
<dbReference type="Pfam" id="PF17392">
    <property type="entry name" value="Urocanase_C"/>
    <property type="match status" value="1"/>
</dbReference>
<dbReference type="Pfam" id="PF17391">
    <property type="entry name" value="Urocanase_N"/>
    <property type="match status" value="1"/>
</dbReference>
<dbReference type="PIRSF" id="PIRSF001423">
    <property type="entry name" value="Urocanate_hydrat"/>
    <property type="match status" value="1"/>
</dbReference>
<dbReference type="SUPFAM" id="SSF111326">
    <property type="entry name" value="Urocanase"/>
    <property type="match status" value="1"/>
</dbReference>
<dbReference type="PROSITE" id="PS01233">
    <property type="entry name" value="UROCANASE"/>
    <property type="match status" value="1"/>
</dbReference>
<accession>B9K286</accession>
<sequence length="557" mass="60922">MTNPRHNIRDVRAATGTELSAKSWMTEAPLRMLMNNLDPDVAERPHELVVYGGIGRAARTWEDFDRIVATLKTLTEEETLIVQSGKPVGVFKTHKDAPRVLIANSNLVPHWATWDHFNELDKKGLAMYGQMTAGSWIYIGTQGIVQGTYETFVEAGRQHYNGNLKGKWILTGGLGGMGGAQPLAAVMAGACCLAVECDETRVDFRLRTRYVDAKAHTLDEALALIDQWTKAGEAKSVGLIGNAADIFPELVKRGIRPDIVTDQTSAHDPINGYLPSGWTVAEWRAKQESDPKAVERAARASMKVHVAAMVDFWNMGVPTLDYGNNIRQVAKEEGLENAFAFPGFVPAYIRPLFCRGIGPFRWAALSGDPEDIYKTDAKVKELLPDNKHLHNWLDMARERIAFQGLPARICWVGLGDRHKLGLAFNEMVRSGELKAPVVIGRDHLDSGSVASPNRETEAMKDGSDAVSDWPLLNALLNCASGATWVSLHHGGGVGMGFSQHSGMVICADGTDDAARRLERVLWNDPATGVMRHADAGYDIALDCAKEKGLRLPGILGN</sequence>
<proteinExistence type="inferred from homology"/>
<keyword id="KW-0963">Cytoplasm</keyword>
<keyword id="KW-0369">Histidine metabolism</keyword>
<keyword id="KW-0456">Lyase</keyword>
<keyword id="KW-0520">NAD</keyword>
<keyword id="KW-1185">Reference proteome</keyword>
<feature type="chain" id="PRO_1000199893" description="Urocanate hydratase">
    <location>
        <begin position="1"/>
        <end position="557"/>
    </location>
</feature>
<feature type="active site" evidence="1">
    <location>
        <position position="410"/>
    </location>
</feature>
<feature type="binding site" evidence="1">
    <location>
        <begin position="52"/>
        <end position="53"/>
    </location>
    <ligand>
        <name>NAD(+)</name>
        <dbReference type="ChEBI" id="CHEBI:57540"/>
    </ligand>
</feature>
<feature type="binding site" evidence="1">
    <location>
        <position position="130"/>
    </location>
    <ligand>
        <name>NAD(+)</name>
        <dbReference type="ChEBI" id="CHEBI:57540"/>
    </ligand>
</feature>
<feature type="binding site" evidence="1">
    <location>
        <begin position="176"/>
        <end position="178"/>
    </location>
    <ligand>
        <name>NAD(+)</name>
        <dbReference type="ChEBI" id="CHEBI:57540"/>
    </ligand>
</feature>
<feature type="binding site" evidence="1">
    <location>
        <position position="196"/>
    </location>
    <ligand>
        <name>NAD(+)</name>
        <dbReference type="ChEBI" id="CHEBI:57540"/>
    </ligand>
</feature>
<feature type="binding site" evidence="1">
    <location>
        <position position="201"/>
    </location>
    <ligand>
        <name>NAD(+)</name>
        <dbReference type="ChEBI" id="CHEBI:57540"/>
    </ligand>
</feature>
<feature type="binding site" evidence="1">
    <location>
        <begin position="242"/>
        <end position="243"/>
    </location>
    <ligand>
        <name>NAD(+)</name>
        <dbReference type="ChEBI" id="CHEBI:57540"/>
    </ligand>
</feature>
<feature type="binding site" evidence="1">
    <location>
        <begin position="263"/>
        <end position="267"/>
    </location>
    <ligand>
        <name>NAD(+)</name>
        <dbReference type="ChEBI" id="CHEBI:57540"/>
    </ligand>
</feature>
<feature type="binding site" evidence="1">
    <location>
        <begin position="273"/>
        <end position="274"/>
    </location>
    <ligand>
        <name>NAD(+)</name>
        <dbReference type="ChEBI" id="CHEBI:57540"/>
    </ligand>
</feature>
<feature type="binding site" evidence="1">
    <location>
        <position position="322"/>
    </location>
    <ligand>
        <name>NAD(+)</name>
        <dbReference type="ChEBI" id="CHEBI:57540"/>
    </ligand>
</feature>
<feature type="binding site" evidence="1">
    <location>
        <position position="492"/>
    </location>
    <ligand>
        <name>NAD(+)</name>
        <dbReference type="ChEBI" id="CHEBI:57540"/>
    </ligand>
</feature>